<name>ELOF1_BOVIN</name>
<keyword id="KW-0158">Chromosome</keyword>
<keyword id="KW-0227">DNA damage</keyword>
<keyword id="KW-0234">DNA repair</keyword>
<keyword id="KW-0539">Nucleus</keyword>
<keyword id="KW-1185">Reference proteome</keyword>
<keyword id="KW-0862">Zinc</keyword>
<gene>
    <name type="primary">ELOF1</name>
</gene>
<dbReference type="EMBL" id="BC134722">
    <property type="protein sequence ID" value="AAI34723.1"/>
    <property type="molecule type" value="mRNA"/>
</dbReference>
<dbReference type="RefSeq" id="NP_001098978.1">
    <property type="nucleotide sequence ID" value="NM_001105508.2"/>
</dbReference>
<dbReference type="RefSeq" id="XP_015327474.1">
    <property type="nucleotide sequence ID" value="XM_015471988.1"/>
</dbReference>
<dbReference type="RefSeq" id="XP_015327475.1">
    <property type="nucleotide sequence ID" value="XM_015471989.3"/>
</dbReference>
<dbReference type="RefSeq" id="XP_024849578.1">
    <property type="nucleotide sequence ID" value="XM_024993810.2"/>
</dbReference>
<dbReference type="RefSeq" id="XP_059743888.1">
    <property type="nucleotide sequence ID" value="XM_059887905.1"/>
</dbReference>
<dbReference type="SMR" id="A4IFR3"/>
<dbReference type="FunCoup" id="A4IFR3">
    <property type="interactions" value="3400"/>
</dbReference>
<dbReference type="STRING" id="9913.ENSBTAP00000052837"/>
<dbReference type="PaxDb" id="9913-ENSBTAP00000052837"/>
<dbReference type="Ensembl" id="ENSBTAT00000052334.3">
    <property type="protein sequence ID" value="ENSBTAP00000052837.2"/>
    <property type="gene ID" value="ENSBTAG00000038151.4"/>
</dbReference>
<dbReference type="GeneID" id="100125945"/>
<dbReference type="KEGG" id="bta:100125945"/>
<dbReference type="CTD" id="84337"/>
<dbReference type="VEuPathDB" id="HostDB:ENSBTAG00000038151"/>
<dbReference type="VGNC" id="VGNC:28446">
    <property type="gene designation" value="ELOF1"/>
</dbReference>
<dbReference type="eggNOG" id="KOG3214">
    <property type="taxonomic scope" value="Eukaryota"/>
</dbReference>
<dbReference type="GeneTree" id="ENSGT00390000000053"/>
<dbReference type="HOGENOM" id="CLU_105983_2_0_1"/>
<dbReference type="InParanoid" id="A4IFR3"/>
<dbReference type="OMA" id="CLDANKK"/>
<dbReference type="OrthoDB" id="445983at2759"/>
<dbReference type="TreeFam" id="TF313731"/>
<dbReference type="Proteomes" id="UP000009136">
    <property type="component" value="Chromosome 7"/>
</dbReference>
<dbReference type="Bgee" id="ENSBTAG00000038151">
    <property type="expression patterns" value="Expressed in myometrium and 108 other cell types or tissues"/>
</dbReference>
<dbReference type="GO" id="GO:0005694">
    <property type="term" value="C:chromosome"/>
    <property type="evidence" value="ECO:0000250"/>
    <property type="project" value="UniProtKB"/>
</dbReference>
<dbReference type="GO" id="GO:0005634">
    <property type="term" value="C:nucleus"/>
    <property type="evidence" value="ECO:0000250"/>
    <property type="project" value="UniProtKB"/>
</dbReference>
<dbReference type="GO" id="GO:0008023">
    <property type="term" value="C:transcription elongation factor complex"/>
    <property type="evidence" value="ECO:0000318"/>
    <property type="project" value="GO_Central"/>
</dbReference>
<dbReference type="GO" id="GO:0030674">
    <property type="term" value="F:protein-macromolecule adaptor activity"/>
    <property type="evidence" value="ECO:0000250"/>
    <property type="project" value="UniProtKB"/>
</dbReference>
<dbReference type="GO" id="GO:0000993">
    <property type="term" value="F:RNA polymerase II complex binding"/>
    <property type="evidence" value="ECO:0000250"/>
    <property type="project" value="UniProtKB"/>
</dbReference>
<dbReference type="GO" id="GO:0008270">
    <property type="term" value="F:zinc ion binding"/>
    <property type="evidence" value="ECO:0007669"/>
    <property type="project" value="UniProtKB-KW"/>
</dbReference>
<dbReference type="GO" id="GO:0006368">
    <property type="term" value="P:transcription elongation by RNA polymerase II"/>
    <property type="evidence" value="ECO:0000318"/>
    <property type="project" value="GO_Central"/>
</dbReference>
<dbReference type="GO" id="GO:0006283">
    <property type="term" value="P:transcription-coupled nucleotide-excision repair"/>
    <property type="evidence" value="ECO:0000250"/>
    <property type="project" value="UniProtKB"/>
</dbReference>
<dbReference type="FunFam" id="2.20.25.190:FF:000002">
    <property type="entry name" value="Transcription elongation factor 1 homolog"/>
    <property type="match status" value="1"/>
</dbReference>
<dbReference type="Gene3D" id="2.20.25.190">
    <property type="match status" value="1"/>
</dbReference>
<dbReference type="InterPro" id="IPR007808">
    <property type="entry name" value="Elf1"/>
</dbReference>
<dbReference type="InterPro" id="IPR038567">
    <property type="entry name" value="T_Elf1_sf"/>
</dbReference>
<dbReference type="PANTHER" id="PTHR20934">
    <property type="entry name" value="TRANSCRIPTION ELONGATION FACTOR 1 HOMOLOG"/>
    <property type="match status" value="1"/>
</dbReference>
<dbReference type="PANTHER" id="PTHR20934:SF0">
    <property type="entry name" value="TRANSCRIPTION ELONGATION FACTOR 1 HOMOLOG"/>
    <property type="match status" value="1"/>
</dbReference>
<dbReference type="Pfam" id="PF05129">
    <property type="entry name" value="Zn_ribbon_Elf1"/>
    <property type="match status" value="1"/>
</dbReference>
<dbReference type="SUPFAM" id="SSF57783">
    <property type="entry name" value="Zinc beta-ribbon"/>
    <property type="match status" value="1"/>
</dbReference>
<evidence type="ECO:0000250" key="1">
    <source>
        <dbReference type="UniProtKB" id="P60002"/>
    </source>
</evidence>
<evidence type="ECO:0000250" key="2">
    <source>
        <dbReference type="UniProtKB" id="P60003"/>
    </source>
</evidence>
<evidence type="ECO:0000305" key="3"/>
<proteinExistence type="inferred from homology"/>
<protein>
    <recommendedName>
        <fullName>Transcription elongation factor 1 homolog</fullName>
    </recommendedName>
</protein>
<comment type="function">
    <text evidence="1">Factor involved in transcription-coupled nucleotide excision repair (TC-NER), a mechanism that rapidly removes RNA polymerase II-blocking lesions from the transcribed strand of active genes. Acts as a key adapter required to anchor TC-NER factors to RNA polymerase II: stably positions UVSSA and the DCX(ERCC8) complex (also named CSA complex) on arrested RNA polymerase II, leading to neddylation and activation of the DCX(ERCC8) complex and ubiquitination of RNA polymerase II.</text>
</comment>
<comment type="subunit">
    <text evidence="1">Associates with RNA polymerase II.</text>
</comment>
<comment type="subcellular location">
    <subcellularLocation>
        <location evidence="1">Nucleus</location>
    </subcellularLocation>
    <subcellularLocation>
        <location evidence="1">Chromosome</location>
    </subcellularLocation>
    <text evidence="1">Associates to RNA polymerase II (Pol II).</text>
</comment>
<comment type="similarity">
    <text evidence="3">Belongs to the ELOF1 family.</text>
</comment>
<feature type="chain" id="PRO_0000327210" description="Transcription elongation factor 1 homolog">
    <location>
        <begin position="1"/>
        <end position="83"/>
    </location>
</feature>
<feature type="binding site" evidence="2">
    <location>
        <position position="26"/>
    </location>
    <ligand>
        <name>Zn(2+)</name>
        <dbReference type="ChEBI" id="CHEBI:29105"/>
    </ligand>
</feature>
<feature type="binding site" evidence="2">
    <location>
        <position position="29"/>
    </location>
    <ligand>
        <name>Zn(2+)</name>
        <dbReference type="ChEBI" id="CHEBI:29105"/>
    </ligand>
</feature>
<feature type="binding site" evidence="2">
    <location>
        <position position="50"/>
    </location>
    <ligand>
        <name>Zn(2+)</name>
        <dbReference type="ChEBI" id="CHEBI:29105"/>
    </ligand>
</feature>
<feature type="binding site" evidence="2">
    <location>
        <position position="53"/>
    </location>
    <ligand>
        <name>Zn(2+)</name>
        <dbReference type="ChEBI" id="CHEBI:29105"/>
    </ligand>
</feature>
<reference key="1">
    <citation type="submission" date="2007-03" db="EMBL/GenBank/DDBJ databases">
        <authorList>
            <consortium name="NIH - Mammalian Gene Collection (MGC) project"/>
        </authorList>
    </citation>
    <scope>NUCLEOTIDE SEQUENCE [LARGE SCALE MRNA]</scope>
    <source>
        <strain>Hereford</strain>
        <tissue>Fetal spinal cord</tissue>
    </source>
</reference>
<organism>
    <name type="scientific">Bos taurus</name>
    <name type="common">Bovine</name>
    <dbReference type="NCBI Taxonomy" id="9913"/>
    <lineage>
        <taxon>Eukaryota</taxon>
        <taxon>Metazoa</taxon>
        <taxon>Chordata</taxon>
        <taxon>Craniata</taxon>
        <taxon>Vertebrata</taxon>
        <taxon>Euteleostomi</taxon>
        <taxon>Mammalia</taxon>
        <taxon>Eutheria</taxon>
        <taxon>Laurasiatheria</taxon>
        <taxon>Artiodactyla</taxon>
        <taxon>Ruminantia</taxon>
        <taxon>Pecora</taxon>
        <taxon>Bovidae</taxon>
        <taxon>Bovinae</taxon>
        <taxon>Bos</taxon>
    </lineage>
</organism>
<sequence>MGRRKSKRKPPPKKKMTGTLETQFTCPFCNHEKSCDVKMDRARNTGVISCTVCLEEFQTPITYLSEPVDVYSDWIDACEAANQ</sequence>
<accession>A4IFR3</accession>